<proteinExistence type="evidence at transcript level"/>
<protein>
    <recommendedName>
        <fullName>CASP-like protein 2U1</fullName>
        <shortName>OlCASPL2U1</shortName>
    </recommendedName>
</protein>
<reference key="1">
    <citation type="submission" date="2010-07" db="EMBL/GenBank/DDBJ databases">
        <title>cDNA library of Osmunda lancea.</title>
        <authorList>
            <person name="Kakugawa-Yatabe Y."/>
            <person name="Tsutsumi C."/>
            <person name="Hirayama Y."/>
            <person name="Kato M."/>
        </authorList>
    </citation>
    <scope>NUCLEOTIDE SEQUENCE [LARGE SCALE MRNA]</scope>
    <source>
        <tissue>Leaf</tissue>
    </source>
</reference>
<reference key="2">
    <citation type="journal article" date="2014" name="Plant Physiol.">
        <title>Functional and evolutionary analysis of the CASPARIAN STRIP MEMBRANE DOMAIN PROTEIN family.</title>
        <authorList>
            <person name="Roppolo D."/>
            <person name="Boeckmann B."/>
            <person name="Pfister A."/>
            <person name="Boutet E."/>
            <person name="Rubio M.C."/>
            <person name="Denervaud-Tendon V."/>
            <person name="Vermeer J.E."/>
            <person name="Gheyselinck J."/>
            <person name="Xenarios I."/>
            <person name="Geldner N."/>
        </authorList>
    </citation>
    <scope>GENE FAMILY</scope>
    <scope>NOMENCLATURE</scope>
</reference>
<dbReference type="EMBL" id="FS994350">
    <property type="status" value="NOT_ANNOTATED_CDS"/>
    <property type="molecule type" value="mRNA"/>
</dbReference>
<dbReference type="SMR" id="P0DI21"/>
<dbReference type="GO" id="GO:0005886">
    <property type="term" value="C:plasma membrane"/>
    <property type="evidence" value="ECO:0007669"/>
    <property type="project" value="UniProtKB-SubCell"/>
</dbReference>
<dbReference type="InterPro" id="IPR006459">
    <property type="entry name" value="CASP/CASPL"/>
</dbReference>
<dbReference type="InterPro" id="IPR006702">
    <property type="entry name" value="CASP_dom"/>
</dbReference>
<dbReference type="NCBIfam" id="TIGR01569">
    <property type="entry name" value="A_tha_TIGR01569"/>
    <property type="match status" value="1"/>
</dbReference>
<dbReference type="PANTHER" id="PTHR33573:SF30">
    <property type="entry name" value="CASP-LIKE PROTEIN 2C1-RELATED"/>
    <property type="match status" value="1"/>
</dbReference>
<dbReference type="PANTHER" id="PTHR33573">
    <property type="entry name" value="CASP-LIKE PROTEIN 4A4"/>
    <property type="match status" value="1"/>
</dbReference>
<dbReference type="Pfam" id="PF04535">
    <property type="entry name" value="CASP_dom"/>
    <property type="match status" value="1"/>
</dbReference>
<name>CSPL2_OSMLA</name>
<accession>P0DI21</accession>
<keyword id="KW-1003">Cell membrane</keyword>
<keyword id="KW-0472">Membrane</keyword>
<keyword id="KW-0812">Transmembrane</keyword>
<keyword id="KW-1133">Transmembrane helix</keyword>
<comment type="subunit">
    <text evidence="1">Homodimer and heterodimers.</text>
</comment>
<comment type="subcellular location">
    <subcellularLocation>
        <location evidence="1">Cell membrane</location>
        <topology evidence="1">Multi-pass membrane protein</topology>
    </subcellularLocation>
</comment>
<comment type="similarity">
    <text evidence="3">Belongs to the Casparian strip membrane proteins (CASP) family.</text>
</comment>
<evidence type="ECO:0000250" key="1"/>
<evidence type="ECO:0000255" key="2"/>
<evidence type="ECO:0000305" key="3"/>
<feature type="chain" id="PRO_0000417790" description="CASP-like protein 2U1">
    <location>
        <begin position="1"/>
        <end position="177"/>
    </location>
</feature>
<feature type="transmembrane region" description="Helical" evidence="2">
    <location>
        <begin position="1"/>
        <end position="21"/>
    </location>
</feature>
<feature type="topological domain" description="Cytoplasmic" evidence="2">
    <location>
        <begin position="22"/>
        <end position="48"/>
    </location>
</feature>
<feature type="transmembrane region" description="Helical" evidence="2">
    <location>
        <begin position="49"/>
        <end position="69"/>
    </location>
</feature>
<feature type="topological domain" description="Extracellular" evidence="2">
    <location>
        <begin position="70"/>
        <end position="80"/>
    </location>
</feature>
<feature type="transmembrane region" description="Helical" evidence="2">
    <location>
        <begin position="81"/>
        <end position="101"/>
    </location>
</feature>
<feature type="topological domain" description="Cytoplasmic" evidence="2">
    <location>
        <begin position="102"/>
        <end position="131"/>
    </location>
</feature>
<feature type="transmembrane region" description="Helical" evidence="2">
    <location>
        <begin position="132"/>
        <end position="152"/>
    </location>
</feature>
<feature type="topological domain" description="Extracellular" evidence="2">
    <location>
        <begin position="153"/>
        <end position="177"/>
    </location>
</feature>
<sequence>MVLRIVASLLSIAALVLMAKDKQVVYLNLAGEELTLEAKHSYVEAFVYLVYSNGLVAIYCFLLVFALVFRLIDKAGCGKSAAWIIFLLDQGLAYVLLAAAAASTEVAYVAKRGNNKVGWSEVCSTFGHFCNLVGVSIVITFISVLAMATLSVMSARRLFKTYGPERKQISSNDAPAI</sequence>
<organism>
    <name type="scientific">Osmunda lancea</name>
    <name type="common">Fern</name>
    <dbReference type="NCBI Taxonomy" id="90694"/>
    <lineage>
        <taxon>Eukaryota</taxon>
        <taxon>Viridiplantae</taxon>
        <taxon>Streptophyta</taxon>
        <taxon>Embryophyta</taxon>
        <taxon>Tracheophyta</taxon>
        <taxon>Polypodiopsida</taxon>
        <taxon>Polypodiidae</taxon>
        <taxon>Osmundales</taxon>
        <taxon>Osmundaceae</taxon>
        <taxon>Osmunda</taxon>
    </lineage>
</organism>